<dbReference type="EC" id="2.1.2.11" evidence="1"/>
<dbReference type="EMBL" id="CU928164">
    <property type="protein sequence ID" value="CAR16275.1"/>
    <property type="molecule type" value="Genomic_DNA"/>
</dbReference>
<dbReference type="RefSeq" id="WP_000805461.1">
    <property type="nucleotide sequence ID" value="NC_011750.1"/>
</dbReference>
<dbReference type="RefSeq" id="YP_002406183.1">
    <property type="nucleotide sequence ID" value="NC_011750.1"/>
</dbReference>
<dbReference type="SMR" id="B7NI94"/>
<dbReference type="STRING" id="585057.ECIAI39_0135"/>
<dbReference type="KEGG" id="ect:ECIAI39_0135"/>
<dbReference type="PATRIC" id="fig|585057.6.peg.145"/>
<dbReference type="HOGENOM" id="CLU_036645_1_0_6"/>
<dbReference type="UniPathway" id="UPA00028">
    <property type="reaction ID" value="UER00003"/>
</dbReference>
<dbReference type="Proteomes" id="UP000000749">
    <property type="component" value="Chromosome"/>
</dbReference>
<dbReference type="GO" id="GO:0005737">
    <property type="term" value="C:cytoplasm"/>
    <property type="evidence" value="ECO:0007669"/>
    <property type="project" value="UniProtKB-SubCell"/>
</dbReference>
<dbReference type="GO" id="GO:0003864">
    <property type="term" value="F:3-methyl-2-oxobutanoate hydroxymethyltransferase activity"/>
    <property type="evidence" value="ECO:0007669"/>
    <property type="project" value="UniProtKB-UniRule"/>
</dbReference>
<dbReference type="GO" id="GO:0000287">
    <property type="term" value="F:magnesium ion binding"/>
    <property type="evidence" value="ECO:0007669"/>
    <property type="project" value="TreeGrafter"/>
</dbReference>
<dbReference type="GO" id="GO:0015940">
    <property type="term" value="P:pantothenate biosynthetic process"/>
    <property type="evidence" value="ECO:0007669"/>
    <property type="project" value="UniProtKB-UniRule"/>
</dbReference>
<dbReference type="CDD" id="cd06557">
    <property type="entry name" value="KPHMT-like"/>
    <property type="match status" value="1"/>
</dbReference>
<dbReference type="FunFam" id="3.20.20.60:FF:000003">
    <property type="entry name" value="3-methyl-2-oxobutanoate hydroxymethyltransferase"/>
    <property type="match status" value="1"/>
</dbReference>
<dbReference type="Gene3D" id="3.20.20.60">
    <property type="entry name" value="Phosphoenolpyruvate-binding domains"/>
    <property type="match status" value="1"/>
</dbReference>
<dbReference type="HAMAP" id="MF_00156">
    <property type="entry name" value="PanB"/>
    <property type="match status" value="1"/>
</dbReference>
<dbReference type="InterPro" id="IPR003700">
    <property type="entry name" value="Pantoate_hydroxy_MeTrfase"/>
</dbReference>
<dbReference type="InterPro" id="IPR015813">
    <property type="entry name" value="Pyrv/PenolPyrv_kinase-like_dom"/>
</dbReference>
<dbReference type="InterPro" id="IPR040442">
    <property type="entry name" value="Pyrv_kinase-like_dom_sf"/>
</dbReference>
<dbReference type="NCBIfam" id="TIGR00222">
    <property type="entry name" value="panB"/>
    <property type="match status" value="1"/>
</dbReference>
<dbReference type="NCBIfam" id="NF001452">
    <property type="entry name" value="PRK00311.1"/>
    <property type="match status" value="1"/>
</dbReference>
<dbReference type="PANTHER" id="PTHR20881">
    <property type="entry name" value="3-METHYL-2-OXOBUTANOATE HYDROXYMETHYLTRANSFERASE"/>
    <property type="match status" value="1"/>
</dbReference>
<dbReference type="PANTHER" id="PTHR20881:SF0">
    <property type="entry name" value="3-METHYL-2-OXOBUTANOATE HYDROXYMETHYLTRANSFERASE"/>
    <property type="match status" value="1"/>
</dbReference>
<dbReference type="Pfam" id="PF02548">
    <property type="entry name" value="Pantoate_transf"/>
    <property type="match status" value="1"/>
</dbReference>
<dbReference type="PIRSF" id="PIRSF000388">
    <property type="entry name" value="Pantoate_hydroxy_MeTrfase"/>
    <property type="match status" value="1"/>
</dbReference>
<dbReference type="SUPFAM" id="SSF51621">
    <property type="entry name" value="Phosphoenolpyruvate/pyruvate domain"/>
    <property type="match status" value="1"/>
</dbReference>
<reference key="1">
    <citation type="journal article" date="2009" name="PLoS Genet.">
        <title>Organised genome dynamics in the Escherichia coli species results in highly diverse adaptive paths.</title>
        <authorList>
            <person name="Touchon M."/>
            <person name="Hoede C."/>
            <person name="Tenaillon O."/>
            <person name="Barbe V."/>
            <person name="Baeriswyl S."/>
            <person name="Bidet P."/>
            <person name="Bingen E."/>
            <person name="Bonacorsi S."/>
            <person name="Bouchier C."/>
            <person name="Bouvet O."/>
            <person name="Calteau A."/>
            <person name="Chiapello H."/>
            <person name="Clermont O."/>
            <person name="Cruveiller S."/>
            <person name="Danchin A."/>
            <person name="Diard M."/>
            <person name="Dossat C."/>
            <person name="Karoui M.E."/>
            <person name="Frapy E."/>
            <person name="Garry L."/>
            <person name="Ghigo J.M."/>
            <person name="Gilles A.M."/>
            <person name="Johnson J."/>
            <person name="Le Bouguenec C."/>
            <person name="Lescat M."/>
            <person name="Mangenot S."/>
            <person name="Martinez-Jehanne V."/>
            <person name="Matic I."/>
            <person name="Nassif X."/>
            <person name="Oztas S."/>
            <person name="Petit M.A."/>
            <person name="Pichon C."/>
            <person name="Rouy Z."/>
            <person name="Ruf C.S."/>
            <person name="Schneider D."/>
            <person name="Tourret J."/>
            <person name="Vacherie B."/>
            <person name="Vallenet D."/>
            <person name="Medigue C."/>
            <person name="Rocha E.P.C."/>
            <person name="Denamur E."/>
        </authorList>
    </citation>
    <scope>NUCLEOTIDE SEQUENCE [LARGE SCALE GENOMIC DNA]</scope>
    <source>
        <strain>IAI39 / ExPEC</strain>
    </source>
</reference>
<evidence type="ECO:0000255" key="1">
    <source>
        <dbReference type="HAMAP-Rule" id="MF_00156"/>
    </source>
</evidence>
<gene>
    <name evidence="1" type="primary">panB</name>
    <name type="ordered locus">ECIAI39_0135</name>
</gene>
<comment type="function">
    <text evidence="1">Catalyzes the reversible reaction in which hydroxymethyl group from 5,10-methylenetetrahydrofolate is transferred onto alpha-ketoisovalerate to form ketopantoate.</text>
</comment>
<comment type="catalytic activity">
    <reaction evidence="1">
        <text>3-methyl-2-oxobutanoate + (6R)-5,10-methylene-5,6,7,8-tetrahydrofolate + H2O = 2-dehydropantoate + (6S)-5,6,7,8-tetrahydrofolate</text>
        <dbReference type="Rhea" id="RHEA:11824"/>
        <dbReference type="ChEBI" id="CHEBI:11561"/>
        <dbReference type="ChEBI" id="CHEBI:11851"/>
        <dbReference type="ChEBI" id="CHEBI:15377"/>
        <dbReference type="ChEBI" id="CHEBI:15636"/>
        <dbReference type="ChEBI" id="CHEBI:57453"/>
        <dbReference type="EC" id="2.1.2.11"/>
    </reaction>
</comment>
<comment type="cofactor">
    <cofactor evidence="1">
        <name>Mg(2+)</name>
        <dbReference type="ChEBI" id="CHEBI:18420"/>
    </cofactor>
    <text evidence="1">Binds 1 Mg(2+) ion per subunit.</text>
</comment>
<comment type="pathway">
    <text evidence="1">Cofactor biosynthesis; (R)-pantothenate biosynthesis; (R)-pantoate from 3-methyl-2-oxobutanoate: step 1/2.</text>
</comment>
<comment type="subunit">
    <text evidence="1">Homodecamer; pentamer of dimers.</text>
</comment>
<comment type="subcellular location">
    <subcellularLocation>
        <location evidence="1">Cytoplasm</location>
    </subcellularLocation>
</comment>
<comment type="similarity">
    <text evidence="1">Belongs to the PanB family.</text>
</comment>
<organism>
    <name type="scientific">Escherichia coli O7:K1 (strain IAI39 / ExPEC)</name>
    <dbReference type="NCBI Taxonomy" id="585057"/>
    <lineage>
        <taxon>Bacteria</taxon>
        <taxon>Pseudomonadati</taxon>
        <taxon>Pseudomonadota</taxon>
        <taxon>Gammaproteobacteria</taxon>
        <taxon>Enterobacterales</taxon>
        <taxon>Enterobacteriaceae</taxon>
        <taxon>Escherichia</taxon>
    </lineage>
</organism>
<protein>
    <recommendedName>
        <fullName evidence="1">3-methyl-2-oxobutanoate hydroxymethyltransferase</fullName>
        <ecNumber evidence="1">2.1.2.11</ecNumber>
    </recommendedName>
    <alternativeName>
        <fullName evidence="1">Ketopantoate hydroxymethyltransferase</fullName>
        <shortName evidence="1">KPHMT</shortName>
    </alternativeName>
</protein>
<accession>B7NI94</accession>
<sequence>MKPTTIASLQKCKQDKKRFATITAYDYSFAKLFAEEGLNVMLVGDSLGMTVQGHDSTLPVTVADIAYHTAAVRRGAPNCLLLADLPFMAYATPEQAFENAATVMRAGANMVKIEGGEWLVETVQMLTERAVPVCGHLGLTPQSVNIFGGYKVQGRGDEAGDQLLSDALALEAAGAQLLVLECVPVELAKRITEALAIPVIGIGAGNVTDGQILVMHDAFGITGGHIPKFAKNFLAETGDIRAAVRQYMAEVESGVYPGEEHSFH</sequence>
<feature type="chain" id="PRO_1000118123" description="3-methyl-2-oxobutanoate hydroxymethyltransferase">
    <location>
        <begin position="1"/>
        <end position="264"/>
    </location>
</feature>
<feature type="active site" description="Proton acceptor" evidence="1">
    <location>
        <position position="181"/>
    </location>
</feature>
<feature type="binding site" evidence="1">
    <location>
        <begin position="45"/>
        <end position="46"/>
    </location>
    <ligand>
        <name>3-methyl-2-oxobutanoate</name>
        <dbReference type="ChEBI" id="CHEBI:11851"/>
    </ligand>
</feature>
<feature type="binding site" evidence="1">
    <location>
        <position position="45"/>
    </location>
    <ligand>
        <name>Mg(2+)</name>
        <dbReference type="ChEBI" id="CHEBI:18420"/>
    </ligand>
</feature>
<feature type="binding site" evidence="1">
    <location>
        <position position="84"/>
    </location>
    <ligand>
        <name>3-methyl-2-oxobutanoate</name>
        <dbReference type="ChEBI" id="CHEBI:11851"/>
    </ligand>
</feature>
<feature type="binding site" evidence="1">
    <location>
        <position position="84"/>
    </location>
    <ligand>
        <name>Mg(2+)</name>
        <dbReference type="ChEBI" id="CHEBI:18420"/>
    </ligand>
</feature>
<feature type="binding site" evidence="1">
    <location>
        <position position="112"/>
    </location>
    <ligand>
        <name>3-methyl-2-oxobutanoate</name>
        <dbReference type="ChEBI" id="CHEBI:11851"/>
    </ligand>
</feature>
<feature type="binding site" evidence="1">
    <location>
        <position position="114"/>
    </location>
    <ligand>
        <name>Mg(2+)</name>
        <dbReference type="ChEBI" id="CHEBI:18420"/>
    </ligand>
</feature>
<proteinExistence type="inferred from homology"/>
<name>PANB_ECO7I</name>
<keyword id="KW-0963">Cytoplasm</keyword>
<keyword id="KW-0460">Magnesium</keyword>
<keyword id="KW-0479">Metal-binding</keyword>
<keyword id="KW-0566">Pantothenate biosynthesis</keyword>
<keyword id="KW-0808">Transferase</keyword>